<proteinExistence type="evidence at transcript level"/>
<name>S20AB_XENLA</name>
<keyword id="KW-0472">Membrane</keyword>
<keyword id="KW-0592">Phosphate transport</keyword>
<keyword id="KW-1185">Reference proteome</keyword>
<keyword id="KW-0769">Symport</keyword>
<keyword id="KW-0812">Transmembrane</keyword>
<keyword id="KW-1133">Transmembrane helix</keyword>
<keyword id="KW-0813">Transport</keyword>
<comment type="function">
    <text evidence="1">Sodium-phosphate symporter which plays a fundamental housekeeping role in phosphate transport.</text>
</comment>
<comment type="subcellular location">
    <subcellularLocation>
        <location evidence="4">Membrane</location>
        <topology evidence="4">Multi-pass membrane protein</topology>
    </subcellularLocation>
</comment>
<comment type="similarity">
    <text evidence="4">Belongs to the inorganic phosphate transporter (PiT) (TC 2.A.20) family.</text>
</comment>
<dbReference type="EMBL" id="BC059957">
    <property type="protein sequence ID" value="AAH59957.1"/>
    <property type="molecule type" value="mRNA"/>
</dbReference>
<dbReference type="SMR" id="Q6PB26"/>
<dbReference type="DNASU" id="398846"/>
<dbReference type="GeneID" id="398846"/>
<dbReference type="KEGG" id="xla:398846"/>
<dbReference type="AGR" id="Xenbase:XB-GENE-864924"/>
<dbReference type="CTD" id="398846"/>
<dbReference type="Xenbase" id="XB-GENE-864924">
    <property type="gene designation" value="slc20a1.L"/>
</dbReference>
<dbReference type="OMA" id="AWKTGNA"/>
<dbReference type="OrthoDB" id="260807at2759"/>
<dbReference type="Proteomes" id="UP000186698">
    <property type="component" value="Chromosome 3L"/>
</dbReference>
<dbReference type="Bgee" id="398846">
    <property type="expression patterns" value="Expressed in kidney and 19 other cell types or tissues"/>
</dbReference>
<dbReference type="GO" id="GO:0016020">
    <property type="term" value="C:membrane"/>
    <property type="evidence" value="ECO:0007669"/>
    <property type="project" value="UniProtKB-SubCell"/>
</dbReference>
<dbReference type="GO" id="GO:0005315">
    <property type="term" value="F:phosphate transmembrane transporter activity"/>
    <property type="evidence" value="ECO:0000318"/>
    <property type="project" value="GO_Central"/>
</dbReference>
<dbReference type="GO" id="GO:0015293">
    <property type="term" value="F:symporter activity"/>
    <property type="evidence" value="ECO:0007669"/>
    <property type="project" value="UniProtKB-KW"/>
</dbReference>
<dbReference type="GO" id="GO:0035435">
    <property type="term" value="P:phosphate ion transmembrane transport"/>
    <property type="evidence" value="ECO:0000318"/>
    <property type="project" value="GO_Central"/>
</dbReference>
<dbReference type="InterPro" id="IPR001204">
    <property type="entry name" value="Phos_transporter"/>
</dbReference>
<dbReference type="PANTHER" id="PTHR11101">
    <property type="entry name" value="PHOSPHATE TRANSPORTER"/>
    <property type="match status" value="1"/>
</dbReference>
<dbReference type="PANTHER" id="PTHR11101:SF46">
    <property type="entry name" value="SODIUM-DEPENDENT PHOSPHATE TRANSPORTER 1"/>
    <property type="match status" value="1"/>
</dbReference>
<dbReference type="Pfam" id="PF01384">
    <property type="entry name" value="PHO4"/>
    <property type="match status" value="1"/>
</dbReference>
<protein>
    <recommendedName>
        <fullName>Sodium-dependent phosphate transporter 1-B</fullName>
    </recommendedName>
    <alternativeName>
        <fullName>Solute carrier family 20 member 1-B</fullName>
    </alternativeName>
</protein>
<feature type="chain" id="PRO_0000080778" description="Sodium-dependent phosphate transporter 1-B">
    <location>
        <begin position="1"/>
        <end position="685"/>
    </location>
</feature>
<feature type="transmembrane region" description="Helical" evidence="2">
    <location>
        <begin position="21"/>
        <end position="41"/>
    </location>
</feature>
<feature type="transmembrane region" description="Helical" evidence="2">
    <location>
        <begin position="66"/>
        <end position="86"/>
    </location>
</feature>
<feature type="transmembrane region" description="Helical" evidence="2">
    <location>
        <begin position="106"/>
        <end position="126"/>
    </location>
</feature>
<feature type="transmembrane region" description="Helical" evidence="2">
    <location>
        <begin position="162"/>
        <end position="182"/>
    </location>
</feature>
<feature type="transmembrane region" description="Helical" evidence="2">
    <location>
        <begin position="207"/>
        <end position="227"/>
    </location>
</feature>
<feature type="transmembrane region" description="Helical" evidence="2">
    <location>
        <begin position="234"/>
        <end position="254"/>
    </location>
</feature>
<feature type="transmembrane region" description="Helical" evidence="2">
    <location>
        <begin position="517"/>
        <end position="537"/>
    </location>
</feature>
<feature type="transmembrane region" description="Helical" evidence="2">
    <location>
        <begin position="565"/>
        <end position="585"/>
    </location>
</feature>
<feature type="transmembrane region" description="Helical" evidence="2">
    <location>
        <begin position="606"/>
        <end position="626"/>
    </location>
</feature>
<feature type="transmembrane region" description="Helical" evidence="2">
    <location>
        <begin position="656"/>
        <end position="676"/>
    </location>
</feature>
<feature type="region of interest" description="Disordered" evidence="3">
    <location>
        <begin position="489"/>
        <end position="511"/>
    </location>
</feature>
<feature type="compositionally biased region" description="Basic and acidic residues" evidence="3">
    <location>
        <begin position="496"/>
        <end position="511"/>
    </location>
</feature>
<accession>Q6PB26</accession>
<gene>
    <name type="primary">slc20a1-b</name>
</gene>
<evidence type="ECO:0000250" key="1"/>
<evidence type="ECO:0000255" key="2"/>
<evidence type="ECO:0000256" key="3">
    <source>
        <dbReference type="SAM" id="MobiDB-lite"/>
    </source>
</evidence>
<evidence type="ECO:0000305" key="4"/>
<sequence>MESTTAFSAVTSALGIQDVHIMAPYLWMLVLGFVIAFVLAFSVGANDVANSFGTAVGSGVVTLRQACILASIFETVGSVLLGAKVSETIRKGLIDVTMYNSTQELLMAGSISAMFGSAVWQLAASFLKLPISGTHCIVGATIGFSLVAKGQQGVKWIELLRIVLSWFISPLLSGIMSALLFFFVKKFILCKADPVPNGLRALPVFYACTIGINLFSIMYTGAPLLGFDKVPLWGIILISVGCAVFCALFVWFFVCPRMKRKIECEFKSSPSESPLMNKKNRELHCPILKPDPDNIKLPVDGGIVAEVKVPILDMVTVSRTEERTVTFNMGDCDDPIEKEKLNSMETNIDQPMNGSVQLANGNHVQFSQTVSNEMNSSGQYQYHTVHKDSGLYKDLLHKLHLAKVGDCMGDSGDKPLRRNNSYTSYTMAICGMPLDSFRNWDAEARPDEAEKLTVHGADGKKRIRMDSYTSYCNAVADAHMDVEAEEQEEGCIEDVVTDRKSSSSSLEERHDQDKPEVSLLFQFLQILTACFGSFAHGGNDVSNAIGPLVALYLVYESGDVATKAATPIWLLLYGGIGICIGLWVWGRRVIQTMGKDLTPITPSSGFSIELASALTVVIASNVGLPISTTHCKVGSVVSVGWLRSKKAVDWRLFRNIFLAWFVTVPISGLISAGIMALFKYAILKV</sequence>
<reference key="1">
    <citation type="submission" date="2003-10" db="EMBL/GenBank/DDBJ databases">
        <authorList>
            <consortium name="NIH - Xenopus Gene Collection (XGC) project"/>
        </authorList>
    </citation>
    <scope>NUCLEOTIDE SEQUENCE [LARGE SCALE MRNA]</scope>
    <source>
        <tissue>Kidney</tissue>
    </source>
</reference>
<organism>
    <name type="scientific">Xenopus laevis</name>
    <name type="common">African clawed frog</name>
    <dbReference type="NCBI Taxonomy" id="8355"/>
    <lineage>
        <taxon>Eukaryota</taxon>
        <taxon>Metazoa</taxon>
        <taxon>Chordata</taxon>
        <taxon>Craniata</taxon>
        <taxon>Vertebrata</taxon>
        <taxon>Euteleostomi</taxon>
        <taxon>Amphibia</taxon>
        <taxon>Batrachia</taxon>
        <taxon>Anura</taxon>
        <taxon>Pipoidea</taxon>
        <taxon>Pipidae</taxon>
        <taxon>Xenopodinae</taxon>
        <taxon>Xenopus</taxon>
        <taxon>Xenopus</taxon>
    </lineage>
</organism>